<accession>C0RIW8</accession>
<proteinExistence type="inferred from homology"/>
<evidence type="ECO:0000255" key="1">
    <source>
        <dbReference type="HAMAP-Rule" id="MF_00165"/>
    </source>
</evidence>
<gene>
    <name evidence="1" type="primary">tmk</name>
    <name type="ordered locus">BMEA_A1033</name>
</gene>
<feature type="chain" id="PRO_1000123561" description="Thymidylate kinase">
    <location>
        <begin position="1"/>
        <end position="214"/>
    </location>
</feature>
<feature type="binding site" evidence="1">
    <location>
        <begin position="10"/>
        <end position="17"/>
    </location>
    <ligand>
        <name>ATP</name>
        <dbReference type="ChEBI" id="CHEBI:30616"/>
    </ligand>
</feature>
<dbReference type="EC" id="2.7.4.9" evidence="1"/>
<dbReference type="EMBL" id="CP001488">
    <property type="protein sequence ID" value="ACO00776.1"/>
    <property type="molecule type" value="Genomic_DNA"/>
</dbReference>
<dbReference type="RefSeq" id="WP_002964110.1">
    <property type="nucleotide sequence ID" value="NC_012441.1"/>
</dbReference>
<dbReference type="SMR" id="C0RIW8"/>
<dbReference type="GeneID" id="97533737"/>
<dbReference type="KEGG" id="bmi:BMEA_A1033"/>
<dbReference type="HOGENOM" id="CLU_049131_0_0_5"/>
<dbReference type="Proteomes" id="UP000001748">
    <property type="component" value="Chromosome I"/>
</dbReference>
<dbReference type="GO" id="GO:0005829">
    <property type="term" value="C:cytosol"/>
    <property type="evidence" value="ECO:0007669"/>
    <property type="project" value="TreeGrafter"/>
</dbReference>
<dbReference type="GO" id="GO:0005524">
    <property type="term" value="F:ATP binding"/>
    <property type="evidence" value="ECO:0007669"/>
    <property type="project" value="UniProtKB-UniRule"/>
</dbReference>
<dbReference type="GO" id="GO:0004798">
    <property type="term" value="F:dTMP kinase activity"/>
    <property type="evidence" value="ECO:0007669"/>
    <property type="project" value="UniProtKB-UniRule"/>
</dbReference>
<dbReference type="GO" id="GO:0006233">
    <property type="term" value="P:dTDP biosynthetic process"/>
    <property type="evidence" value="ECO:0007669"/>
    <property type="project" value="InterPro"/>
</dbReference>
<dbReference type="GO" id="GO:0006235">
    <property type="term" value="P:dTTP biosynthetic process"/>
    <property type="evidence" value="ECO:0007669"/>
    <property type="project" value="UniProtKB-UniRule"/>
</dbReference>
<dbReference type="GO" id="GO:0006227">
    <property type="term" value="P:dUDP biosynthetic process"/>
    <property type="evidence" value="ECO:0007669"/>
    <property type="project" value="TreeGrafter"/>
</dbReference>
<dbReference type="CDD" id="cd01672">
    <property type="entry name" value="TMPK"/>
    <property type="match status" value="1"/>
</dbReference>
<dbReference type="FunFam" id="3.40.50.300:FF:000225">
    <property type="entry name" value="Thymidylate kinase"/>
    <property type="match status" value="1"/>
</dbReference>
<dbReference type="Gene3D" id="3.40.50.300">
    <property type="entry name" value="P-loop containing nucleotide triphosphate hydrolases"/>
    <property type="match status" value="1"/>
</dbReference>
<dbReference type="HAMAP" id="MF_00165">
    <property type="entry name" value="Thymidylate_kinase"/>
    <property type="match status" value="1"/>
</dbReference>
<dbReference type="InterPro" id="IPR027417">
    <property type="entry name" value="P-loop_NTPase"/>
</dbReference>
<dbReference type="InterPro" id="IPR039430">
    <property type="entry name" value="Thymidylate_kin-like_dom"/>
</dbReference>
<dbReference type="InterPro" id="IPR018095">
    <property type="entry name" value="Thymidylate_kin_CS"/>
</dbReference>
<dbReference type="InterPro" id="IPR018094">
    <property type="entry name" value="Thymidylate_kinase"/>
</dbReference>
<dbReference type="NCBIfam" id="TIGR00041">
    <property type="entry name" value="DTMP_kinase"/>
    <property type="match status" value="1"/>
</dbReference>
<dbReference type="PANTHER" id="PTHR10344">
    <property type="entry name" value="THYMIDYLATE KINASE"/>
    <property type="match status" value="1"/>
</dbReference>
<dbReference type="PANTHER" id="PTHR10344:SF4">
    <property type="entry name" value="UMP-CMP KINASE 2, MITOCHONDRIAL"/>
    <property type="match status" value="1"/>
</dbReference>
<dbReference type="Pfam" id="PF02223">
    <property type="entry name" value="Thymidylate_kin"/>
    <property type="match status" value="1"/>
</dbReference>
<dbReference type="SUPFAM" id="SSF52540">
    <property type="entry name" value="P-loop containing nucleoside triphosphate hydrolases"/>
    <property type="match status" value="1"/>
</dbReference>
<dbReference type="PROSITE" id="PS01331">
    <property type="entry name" value="THYMIDYLATE_KINASE"/>
    <property type="match status" value="1"/>
</dbReference>
<reference key="1">
    <citation type="submission" date="2009-03" db="EMBL/GenBank/DDBJ databases">
        <title>Brucella melitensis ATCC 23457 whole genome shotgun sequencing project.</title>
        <authorList>
            <person name="Setubal J.C."/>
            <person name="Boyle S."/>
            <person name="Crasta O.R."/>
            <person name="Gillespie J.J."/>
            <person name="Kenyon R.W."/>
            <person name="Lu J."/>
            <person name="Mane S."/>
            <person name="Nagrani S."/>
            <person name="Shallom J.M."/>
            <person name="Shallom S."/>
            <person name="Shukla M."/>
            <person name="Snyder E.E."/>
            <person name="Sobral B.W."/>
            <person name="Wattam A.R."/>
            <person name="Will R."/>
            <person name="Williams K."/>
            <person name="Yoo H."/>
            <person name="Munk C."/>
            <person name="Tapia R."/>
            <person name="Han C."/>
            <person name="Detter J.C."/>
            <person name="Bruce D."/>
            <person name="Brettin T.S."/>
        </authorList>
    </citation>
    <scope>NUCLEOTIDE SEQUENCE [LARGE SCALE GENOMIC DNA]</scope>
    <source>
        <strain>ATCC 23457</strain>
    </source>
</reference>
<sequence>MSGLFITFEGGEGAGKSTQIALLASHLRNHGFDPVITREPGGSPGAEAIRHVILSGNAETYGPAMEALLFAAARADHVDQLIRPTLAEGRIVLCDRFIDSSRAYQGVTGNLDATYMAAIERIAIDGAMPDLTLVLDICAERGLSRAGKRRGSDTADRFEKEDIAVHEARRQAFLEIARQEPARCKVIDADRSQEKIADEIRSVVDTILTEKGLL</sequence>
<name>KTHY_BRUMB</name>
<organism>
    <name type="scientific">Brucella melitensis biotype 2 (strain ATCC 23457)</name>
    <dbReference type="NCBI Taxonomy" id="546272"/>
    <lineage>
        <taxon>Bacteria</taxon>
        <taxon>Pseudomonadati</taxon>
        <taxon>Pseudomonadota</taxon>
        <taxon>Alphaproteobacteria</taxon>
        <taxon>Hyphomicrobiales</taxon>
        <taxon>Brucellaceae</taxon>
        <taxon>Brucella/Ochrobactrum group</taxon>
        <taxon>Brucella</taxon>
    </lineage>
</organism>
<keyword id="KW-0067">ATP-binding</keyword>
<keyword id="KW-0418">Kinase</keyword>
<keyword id="KW-0545">Nucleotide biosynthesis</keyword>
<keyword id="KW-0547">Nucleotide-binding</keyword>
<keyword id="KW-0808">Transferase</keyword>
<protein>
    <recommendedName>
        <fullName evidence="1">Thymidylate kinase</fullName>
        <ecNumber evidence="1">2.7.4.9</ecNumber>
    </recommendedName>
    <alternativeName>
        <fullName evidence="1">dTMP kinase</fullName>
    </alternativeName>
</protein>
<comment type="function">
    <text evidence="1">Phosphorylation of dTMP to form dTDP in both de novo and salvage pathways of dTTP synthesis.</text>
</comment>
<comment type="catalytic activity">
    <reaction evidence="1">
        <text>dTMP + ATP = dTDP + ADP</text>
        <dbReference type="Rhea" id="RHEA:13517"/>
        <dbReference type="ChEBI" id="CHEBI:30616"/>
        <dbReference type="ChEBI" id="CHEBI:58369"/>
        <dbReference type="ChEBI" id="CHEBI:63528"/>
        <dbReference type="ChEBI" id="CHEBI:456216"/>
        <dbReference type="EC" id="2.7.4.9"/>
    </reaction>
</comment>
<comment type="similarity">
    <text evidence="1">Belongs to the thymidylate kinase family.</text>
</comment>